<keyword id="KW-0614">Plasmid</keyword>
<keyword id="KW-1185">Reference proteome</keyword>
<feature type="chain" id="PRO_0000216861" description="Uncharacterized protein pXO2-72/BXB0098/GBAA_pXO2_0098">
    <location>
        <begin position="1"/>
        <end position="81"/>
    </location>
</feature>
<name>Y6598_BACAN</name>
<reference key="1">
    <citation type="journal article" date="1999" name="J. Appl. Microbiol.">
        <title>Sequence, assembly and analysis of pXO1 and pXO2.</title>
        <authorList>
            <person name="Okinaka R.T."/>
            <person name="Cloud K."/>
            <person name="Hampton O."/>
            <person name="Hoffmaster A."/>
            <person name="Hill K.K."/>
            <person name="Keim P."/>
            <person name="Koehler T."/>
            <person name="Lamke G."/>
            <person name="Kumano S."/>
            <person name="Manter D."/>
            <person name="Martinez Y."/>
            <person name="Ricke D."/>
            <person name="Svensson R."/>
            <person name="Jackson P.J."/>
        </authorList>
    </citation>
    <scope>NUCLEOTIDE SEQUENCE [GENOMIC DNA]</scope>
    <source>
        <strain>Pasteur</strain>
    </source>
</reference>
<reference key="2">
    <citation type="journal article" date="2002" name="Science">
        <title>Comparative genome sequencing for discovery of novel polymorphisms in Bacillus anthracis.</title>
        <authorList>
            <person name="Read T.D."/>
            <person name="Salzberg S.L."/>
            <person name="Pop M."/>
            <person name="Shumway M.F."/>
            <person name="Umayam L."/>
            <person name="Jiang L."/>
            <person name="Holtzapple E."/>
            <person name="Busch J.D."/>
            <person name="Smith K.L."/>
            <person name="Schupp J.M."/>
            <person name="Solomon D."/>
            <person name="Keim P."/>
            <person name="Fraser C.M."/>
        </authorList>
    </citation>
    <scope>NUCLEOTIDE SEQUENCE [GENOMIC DNA]</scope>
    <source>
        <strain>Ames / isolate Florida / A2012</strain>
    </source>
</reference>
<reference key="3">
    <citation type="journal article" date="2009" name="J. Bacteriol.">
        <title>The complete genome sequence of Bacillus anthracis Ames 'Ancestor'.</title>
        <authorList>
            <person name="Ravel J."/>
            <person name="Jiang L."/>
            <person name="Stanley S.T."/>
            <person name="Wilson M.R."/>
            <person name="Decker R.S."/>
            <person name="Read T.D."/>
            <person name="Worsham P."/>
            <person name="Keim P.S."/>
            <person name="Salzberg S.L."/>
            <person name="Fraser-Liggett C.M."/>
            <person name="Rasko D.A."/>
        </authorList>
    </citation>
    <scope>NUCLEOTIDE SEQUENCE [LARGE SCALE GENOMIC DNA]</scope>
    <source>
        <strain>Ames ancestor</strain>
    </source>
</reference>
<geneLocation type="plasmid">
    <name>pXO2</name>
</geneLocation>
<gene>
    <name type="ordered locus">pXO2-72</name>
    <name type="ordered locus">BXB0098</name>
    <name type="ordered locus">GBAA_pXO2_0098</name>
</gene>
<dbReference type="EMBL" id="AF188935">
    <property type="protein sequence ID" value="AAF13677.1"/>
    <property type="molecule type" value="Genomic_DNA"/>
</dbReference>
<dbReference type="EMBL" id="AE011191">
    <property type="protein sequence ID" value="AAM26249.1"/>
    <property type="molecule type" value="Genomic_DNA"/>
</dbReference>
<dbReference type="EMBL" id="AE017335">
    <property type="protein sequence ID" value="AAT35512.1"/>
    <property type="molecule type" value="Genomic_DNA"/>
</dbReference>
<dbReference type="RefSeq" id="NP_053227.1">
    <property type="nucleotide sequence ID" value="NC_002146.1"/>
</dbReference>
<dbReference type="RefSeq" id="WP_000898261.1">
    <property type="nucleotide sequence ID" value="NZ_VTZL01000009.1"/>
</dbReference>
<dbReference type="GeneID" id="45025386"/>
<dbReference type="KEGG" id="banh:HYU01_29445"/>
<dbReference type="KEGG" id="bar:GBAA_pXO2_0098"/>
<dbReference type="HOGENOM" id="CLU_199543_0_0_9"/>
<dbReference type="OMA" id="CDRWEIT"/>
<dbReference type="Proteomes" id="UP000000594">
    <property type="component" value="Plasmid pXO2"/>
</dbReference>
<dbReference type="InterPro" id="IPR020250">
    <property type="entry name" value="Plasmid_pXO2-72"/>
</dbReference>
<dbReference type="Pfam" id="PF17443">
    <property type="entry name" value="pXO2-72"/>
    <property type="match status" value="1"/>
</dbReference>
<organism>
    <name type="scientific">Bacillus anthracis</name>
    <dbReference type="NCBI Taxonomy" id="1392"/>
    <lineage>
        <taxon>Bacteria</taxon>
        <taxon>Bacillati</taxon>
        <taxon>Bacillota</taxon>
        <taxon>Bacilli</taxon>
        <taxon>Bacillales</taxon>
        <taxon>Bacillaceae</taxon>
        <taxon>Bacillus</taxon>
        <taxon>Bacillus cereus group</taxon>
    </lineage>
</organism>
<protein>
    <recommendedName>
        <fullName>Uncharacterized protein pXO2-72/BXB0098/GBAA_pXO2_0098</fullName>
    </recommendedName>
</protein>
<proteinExistence type="predicted"/>
<accession>Q9RMW2</accession>
<sequence length="81" mass="9732">MLFMLDEIMTPREACDRWGITQEALRMKLKRGKDSELVDKLIREGKLKYYRPIEKKRGEWILTVEAMKILFPKSNRSFIIK</sequence>